<organism>
    <name type="scientific">Arabidopsis thaliana</name>
    <name type="common">Mouse-ear cress</name>
    <dbReference type="NCBI Taxonomy" id="3702"/>
    <lineage>
        <taxon>Eukaryota</taxon>
        <taxon>Viridiplantae</taxon>
        <taxon>Streptophyta</taxon>
        <taxon>Embryophyta</taxon>
        <taxon>Tracheophyta</taxon>
        <taxon>Spermatophyta</taxon>
        <taxon>Magnoliopsida</taxon>
        <taxon>eudicotyledons</taxon>
        <taxon>Gunneridae</taxon>
        <taxon>Pentapetalae</taxon>
        <taxon>rosids</taxon>
        <taxon>malvids</taxon>
        <taxon>Brassicales</taxon>
        <taxon>Brassicaceae</taxon>
        <taxon>Camelineae</taxon>
        <taxon>Arabidopsis</taxon>
    </lineage>
</organism>
<proteinExistence type="evidence at protein level"/>
<feature type="chain" id="PRO_0000434951" description="E4 SUMO-protein ligase PIAL1">
    <location>
        <begin position="1"/>
        <end position="847"/>
    </location>
</feature>
<feature type="repeat" description="1" evidence="5">
    <location>
        <begin position="569"/>
        <end position="591"/>
    </location>
</feature>
<feature type="repeat" description="2" evidence="5">
    <location>
        <begin position="592"/>
        <end position="614"/>
    </location>
</feature>
<feature type="repeat" description="3" evidence="5">
    <location>
        <begin position="615"/>
        <end position="637"/>
    </location>
</feature>
<feature type="repeat" description="4" evidence="5">
    <location>
        <begin position="638"/>
        <end position="659"/>
    </location>
</feature>
<feature type="repeat" description="5" evidence="5">
    <location>
        <begin position="660"/>
        <end position="682"/>
    </location>
</feature>
<feature type="repeat" description="6" evidence="5">
    <location>
        <begin position="683"/>
        <end position="705"/>
    </location>
</feature>
<feature type="repeat" description="7" evidence="5">
    <location>
        <begin position="706"/>
        <end position="728"/>
    </location>
</feature>
<feature type="zinc finger region" description="SP-RING-type" evidence="2">
    <location>
        <begin position="268"/>
        <end position="349"/>
    </location>
</feature>
<feature type="region of interest" description="Interacting domain (IND), required for interaction with MOM1 and PIAL2" evidence="4">
    <location>
        <begin position="113"/>
        <end position="271"/>
    </location>
</feature>
<feature type="region of interest" description="7 X 23 AA approximate tandem repeats">
    <location>
        <begin position="569"/>
        <end position="728"/>
    </location>
</feature>
<feature type="binding site" evidence="2">
    <location>
        <position position="299"/>
    </location>
    <ligand>
        <name>Zn(2+)</name>
        <dbReference type="ChEBI" id="CHEBI:29105"/>
    </ligand>
</feature>
<feature type="binding site" evidence="2">
    <location>
        <position position="301"/>
    </location>
    <ligand>
        <name>Zn(2+)</name>
        <dbReference type="ChEBI" id="CHEBI:29105"/>
    </ligand>
</feature>
<feature type="binding site" evidence="2">
    <location>
        <position position="322"/>
    </location>
    <ligand>
        <name>Zn(2+)</name>
        <dbReference type="ChEBI" id="CHEBI:29105"/>
    </ligand>
</feature>
<feature type="binding site" evidence="2">
    <location>
        <position position="325"/>
    </location>
    <ligand>
        <name>Zn(2+)</name>
        <dbReference type="ChEBI" id="CHEBI:29105"/>
    </ligand>
</feature>
<feature type="splice variant" id="VSP_057991" description="In isoform 2.">
    <original>PSWRCPHCNQSVCYTDIRVDQKLRK</original>
    <variation>HHGAARI</variation>
    <location>
        <begin position="318"/>
        <end position="342"/>
    </location>
</feature>
<protein>
    <recommendedName>
        <fullName evidence="5">E4 SUMO-protein ligase PIAL1</fullName>
        <ecNumber evidence="3">2.3.2.-</ecNumber>
    </recommendedName>
    <alternativeName>
        <fullName evidence="9">Protein EMBRYO DEFECTIVE 3001</fullName>
    </alternativeName>
    <alternativeName>
        <fullName evidence="5">Protein INHIBITOR OF ACTIVATED STAT-LIKE 1</fullName>
    </alternativeName>
</protein>
<evidence type="ECO:0000250" key="1">
    <source>
        <dbReference type="UniProtKB" id="F4JYG0"/>
    </source>
</evidence>
<evidence type="ECO:0000255" key="2">
    <source>
        <dbReference type="PROSITE-ProRule" id="PRU00452"/>
    </source>
</evidence>
<evidence type="ECO:0000269" key="3">
    <source>
    </source>
</evidence>
<evidence type="ECO:0000269" key="4">
    <source>
    </source>
</evidence>
<evidence type="ECO:0000303" key="5">
    <source>
    </source>
</evidence>
<evidence type="ECO:0000305" key="6"/>
<evidence type="ECO:0000312" key="7">
    <source>
        <dbReference type="Araport" id="AT1G08910"/>
    </source>
</evidence>
<evidence type="ECO:0000312" key="8">
    <source>
        <dbReference type="EMBL" id="AAB70421.1"/>
    </source>
</evidence>
<evidence type="ECO:0000312" key="9">
    <source>
        <dbReference type="EMBL" id="AEE28366.1"/>
    </source>
</evidence>
<reference key="1">
    <citation type="journal article" date="2014" name="Plant Cell">
        <title>Arabidopsis PIAL1 and 2 promote SUMO chain formation as E4-type SUMO ligases and are involved in stress responses and sulfur metabolism.</title>
        <authorList>
            <person name="Tomanov K."/>
            <person name="Zeschmann A."/>
            <person name="Hermkes R."/>
            <person name="Eifler K."/>
            <person name="Ziba I."/>
            <person name="Grieco M."/>
            <person name="Novatchkova M."/>
            <person name="Hofmann K."/>
            <person name="Hesse H."/>
            <person name="Bachmair A."/>
        </authorList>
    </citation>
    <scope>NUCLEOTIDE SEQUENCE [MRNA]</scope>
    <scope>FUNCTION</scope>
    <scope>DISRUPTION PHENOTYPE</scope>
    <scope>TISSUE SPECIFICITY</scope>
    <source>
        <strain>cv. Columbia</strain>
    </source>
</reference>
<reference key="2">
    <citation type="journal article" date="2000" name="Nature">
        <title>Sequence and analysis of chromosome 1 of the plant Arabidopsis thaliana.</title>
        <authorList>
            <person name="Theologis A."/>
            <person name="Ecker J.R."/>
            <person name="Palm C.J."/>
            <person name="Federspiel N.A."/>
            <person name="Kaul S."/>
            <person name="White O."/>
            <person name="Alonso J."/>
            <person name="Altafi H."/>
            <person name="Araujo R."/>
            <person name="Bowman C.L."/>
            <person name="Brooks S.Y."/>
            <person name="Buehler E."/>
            <person name="Chan A."/>
            <person name="Chao Q."/>
            <person name="Chen H."/>
            <person name="Cheuk R.F."/>
            <person name="Chin C.W."/>
            <person name="Chung M.K."/>
            <person name="Conn L."/>
            <person name="Conway A.B."/>
            <person name="Conway A.R."/>
            <person name="Creasy T.H."/>
            <person name="Dewar K."/>
            <person name="Dunn P."/>
            <person name="Etgu P."/>
            <person name="Feldblyum T.V."/>
            <person name="Feng J.-D."/>
            <person name="Fong B."/>
            <person name="Fujii C.Y."/>
            <person name="Gill J.E."/>
            <person name="Goldsmith A.D."/>
            <person name="Haas B."/>
            <person name="Hansen N.F."/>
            <person name="Hughes B."/>
            <person name="Huizar L."/>
            <person name="Hunter J.L."/>
            <person name="Jenkins J."/>
            <person name="Johnson-Hopson C."/>
            <person name="Khan S."/>
            <person name="Khaykin E."/>
            <person name="Kim C.J."/>
            <person name="Koo H.L."/>
            <person name="Kremenetskaia I."/>
            <person name="Kurtz D.B."/>
            <person name="Kwan A."/>
            <person name="Lam B."/>
            <person name="Langin-Hooper S."/>
            <person name="Lee A."/>
            <person name="Lee J.M."/>
            <person name="Lenz C.A."/>
            <person name="Li J.H."/>
            <person name="Li Y.-P."/>
            <person name="Lin X."/>
            <person name="Liu S.X."/>
            <person name="Liu Z.A."/>
            <person name="Luros J.S."/>
            <person name="Maiti R."/>
            <person name="Marziali A."/>
            <person name="Militscher J."/>
            <person name="Miranda M."/>
            <person name="Nguyen M."/>
            <person name="Nierman W.C."/>
            <person name="Osborne B.I."/>
            <person name="Pai G."/>
            <person name="Peterson J."/>
            <person name="Pham P.K."/>
            <person name="Rizzo M."/>
            <person name="Rooney T."/>
            <person name="Rowley D."/>
            <person name="Sakano H."/>
            <person name="Salzberg S.L."/>
            <person name="Schwartz J.R."/>
            <person name="Shinn P."/>
            <person name="Southwick A.M."/>
            <person name="Sun H."/>
            <person name="Tallon L.J."/>
            <person name="Tambunga G."/>
            <person name="Toriumi M.J."/>
            <person name="Town C.D."/>
            <person name="Utterback T."/>
            <person name="Van Aken S."/>
            <person name="Vaysberg M."/>
            <person name="Vysotskaia V.S."/>
            <person name="Walker M."/>
            <person name="Wu D."/>
            <person name="Yu G."/>
            <person name="Fraser C.M."/>
            <person name="Venter J.C."/>
            <person name="Davis R.W."/>
        </authorList>
    </citation>
    <scope>NUCLEOTIDE SEQUENCE [LARGE SCALE GENOMIC DNA]</scope>
    <source>
        <strain>cv. Columbia</strain>
    </source>
</reference>
<reference key="3">
    <citation type="journal article" date="2017" name="Plant J.">
        <title>Araport11: a complete reannotation of the Arabidopsis thaliana reference genome.</title>
        <authorList>
            <person name="Cheng C.Y."/>
            <person name="Krishnakumar V."/>
            <person name="Chan A.P."/>
            <person name="Thibaud-Nissen F."/>
            <person name="Schobel S."/>
            <person name="Town C.D."/>
        </authorList>
    </citation>
    <scope>GENOME REANNOTATION</scope>
    <source>
        <strain>cv. Columbia</strain>
    </source>
</reference>
<reference key="4">
    <citation type="journal article" date="2016" name="Plant Cell">
        <title>The SUMO E3 ligase-like proteins PIAL1 and PIAL2 interact with MOM1 and form a novel complex required for transcriptional silencing.</title>
        <authorList>
            <person name="Han Y.-F."/>
            <person name="Zhao Q.-Y."/>
            <person name="Dang L.-L."/>
            <person name="Luo Y.-X."/>
            <person name="Chen S.-S."/>
            <person name="Shao C.-R."/>
            <person name="Huang H.-W."/>
            <person name="Li Y.-Q."/>
            <person name="Li L."/>
            <person name="Cai T."/>
            <person name="Chen S."/>
            <person name="He X.-J."/>
        </authorList>
    </citation>
    <scope>FUNCTION</scope>
    <scope>INTERACTION WITH MOM1 AND PIAL2</scope>
    <source>
        <strain>cv. Columbia</strain>
    </source>
</reference>
<name>PIAL1_ARATH</name>
<gene>
    <name evidence="5" type="primary">PIAL1</name>
    <name evidence="9" type="synonym">EMB3001</name>
    <name evidence="7" type="ordered locus">At1g08910</name>
    <name evidence="8" type="ORF">F7G19.21</name>
</gene>
<accession>A0A0A7EPL0</accession>
<accession>F4HXS5</accession>
<accession>O04038</accession>
<sequence>MVIPATSRFGFRAEFNTKEFQASCISLANEIDAAIGRNEVPGNIQELALILNNVCRRKCDDYQTRAVVMALMISVKSACQLGWFPERETQELLAIIDLMWNGFSCPENVTSCVNSPVTLISQVIERFYPCVKLGHILVSFEAKPESKMMMKDFHISKKMPHSPKQKVGLFVVRTEDISRSNCIVHPQGVSFLLNGKGIDKRVNISMESGPQLPTNVTALLNLGANLLQAIGCFGGSYLIAIAFMDVIPLPNKPLLKDYVHPEVVGSNSDCDIIEGPSRISLSCPISRTRIKLPVKGHVCKHLQCFDFWNYVNMNTRRPSWRCPHCNQSVCYTDIRVDQKLRKILEEVGRNAADVVISADGTWMVETENDEDVELVPETTHDHGDPNSFINLGPTVKNPARDENEMETSTQVEEHNPCLSEIQGPSNDTHRPASDYTMLNQSHTSTNTLPQLPRTLNAFDGQQFVNLPQVINTRDSPASQALPMTFSPTPSPQDILATNAANFGTSMPAAQSSQFQGSHVTSLGNCEGRTSDLMARWNHIYGRVQTQFPPAPLSHHHYSMQNQSPSPAQQRPVPSYIAHPQTFHVNYGENADQRWMPSSIAHPQTLPVNYGGNTNQRPIPSSIAHPQTLPVNYRGNTDHRSTPYSITHLQTLLNYGGNADQRPMPSSITNLQTLPATYGGYAHQRPMSSSITHPRTSPVNYGGTPDQRPMPSSITHPQTLPVSYGGTTDQILNPGGAMGQFSSREFMNLTPANTENWRPQSRMRGSVAPGTGYDHMIIHPTRPVHPQAQTPPAPLSTSYDGADEIQAFIGHPSYPVSNNETQAGTSSLPVAEGLGYSGSFWSMPPETW</sequence>
<dbReference type="EC" id="2.3.2.-" evidence="3"/>
<dbReference type="EMBL" id="KP067953">
    <property type="protein sequence ID" value="AIY68679.1"/>
    <property type="molecule type" value="mRNA"/>
</dbReference>
<dbReference type="EMBL" id="AC000106">
    <property type="protein sequence ID" value="AAB70421.1"/>
    <property type="status" value="ALT_SEQ"/>
    <property type="molecule type" value="Genomic_DNA"/>
</dbReference>
<dbReference type="EMBL" id="CP002684">
    <property type="protein sequence ID" value="AEE28366.1"/>
    <property type="molecule type" value="Genomic_DNA"/>
</dbReference>
<dbReference type="PIR" id="H86220">
    <property type="entry name" value="H86220"/>
</dbReference>
<dbReference type="RefSeq" id="NP_172366.3">
    <molecule id="A0A0A7EPL0-2"/>
    <property type="nucleotide sequence ID" value="NM_100763.5"/>
</dbReference>
<dbReference type="SMR" id="A0A0A7EPL0"/>
<dbReference type="FunCoup" id="A0A0A7EPL0">
    <property type="interactions" value="185"/>
</dbReference>
<dbReference type="STRING" id="3702.A0A0A7EPL0"/>
<dbReference type="GlyGen" id="A0A0A7EPL0">
    <property type="glycosylation" value="1 site"/>
</dbReference>
<dbReference type="PaxDb" id="3702-AT1G08910.1"/>
<dbReference type="PeptideAtlas" id="A0A0A7EPL0"/>
<dbReference type="ProteomicsDB" id="236752">
    <molecule id="A0A0A7EPL0-1"/>
</dbReference>
<dbReference type="EnsemblPlants" id="AT1G08910.1">
    <molecule id="A0A0A7EPL0-2"/>
    <property type="protein sequence ID" value="AT1G08910.1"/>
    <property type="gene ID" value="AT1G08910"/>
</dbReference>
<dbReference type="GeneID" id="837412"/>
<dbReference type="Gramene" id="AT1G08910.1">
    <molecule id="A0A0A7EPL0-2"/>
    <property type="protein sequence ID" value="AT1G08910.1"/>
    <property type="gene ID" value="AT1G08910"/>
</dbReference>
<dbReference type="KEGG" id="ath:AT1G08910"/>
<dbReference type="Araport" id="AT1G08910"/>
<dbReference type="TAIR" id="AT1G08910">
    <property type="gene designation" value="PIAL1"/>
</dbReference>
<dbReference type="eggNOG" id="KOG2169">
    <property type="taxonomic scope" value="Eukaryota"/>
</dbReference>
<dbReference type="InParanoid" id="A0A0A7EPL0"/>
<dbReference type="OMA" id="ASFHIPM"/>
<dbReference type="OrthoDB" id="10263264at2759"/>
<dbReference type="UniPathway" id="UPA00886"/>
<dbReference type="PRO" id="PR:A0A0A7EPL0"/>
<dbReference type="Proteomes" id="UP000006548">
    <property type="component" value="Chromosome 1"/>
</dbReference>
<dbReference type="ExpressionAtlas" id="A0A0A7EPL0">
    <property type="expression patterns" value="baseline and differential"/>
</dbReference>
<dbReference type="GO" id="GO:0005634">
    <property type="term" value="C:nucleus"/>
    <property type="evidence" value="ECO:0007669"/>
    <property type="project" value="UniProtKB-SubCell"/>
</dbReference>
<dbReference type="GO" id="GO:0016874">
    <property type="term" value="F:ligase activity"/>
    <property type="evidence" value="ECO:0007669"/>
    <property type="project" value="UniProtKB-KW"/>
</dbReference>
<dbReference type="GO" id="GO:0019789">
    <property type="term" value="F:SUMO transferase activity"/>
    <property type="evidence" value="ECO:0000304"/>
    <property type="project" value="UniProtKB"/>
</dbReference>
<dbReference type="GO" id="GO:0008270">
    <property type="term" value="F:zinc ion binding"/>
    <property type="evidence" value="ECO:0007669"/>
    <property type="project" value="UniProtKB-KW"/>
</dbReference>
<dbReference type="GO" id="GO:0051176">
    <property type="term" value="P:positive regulation of sulfur metabolic process"/>
    <property type="evidence" value="ECO:0000316"/>
    <property type="project" value="UniProtKB"/>
</dbReference>
<dbReference type="GO" id="GO:0016925">
    <property type="term" value="P:protein sumoylation"/>
    <property type="evidence" value="ECO:0000314"/>
    <property type="project" value="UniProtKB"/>
</dbReference>
<dbReference type="GO" id="GO:0060966">
    <property type="term" value="P:regulation of gene silencing by regulatory ncRNA"/>
    <property type="evidence" value="ECO:0000315"/>
    <property type="project" value="UniProtKB"/>
</dbReference>
<dbReference type="GO" id="GO:0009737">
    <property type="term" value="P:response to abscisic acid"/>
    <property type="evidence" value="ECO:0000315"/>
    <property type="project" value="UniProtKB"/>
</dbReference>
<dbReference type="GO" id="GO:0006970">
    <property type="term" value="P:response to osmotic stress"/>
    <property type="evidence" value="ECO:0000315"/>
    <property type="project" value="UniProtKB"/>
</dbReference>
<dbReference type="GO" id="GO:0009651">
    <property type="term" value="P:response to salt stress"/>
    <property type="evidence" value="ECO:0000315"/>
    <property type="project" value="UniProtKB"/>
</dbReference>
<dbReference type="CDD" id="cd16650">
    <property type="entry name" value="SP-RING_PIAS-like"/>
    <property type="match status" value="1"/>
</dbReference>
<dbReference type="Gene3D" id="3.30.40.10">
    <property type="entry name" value="Zinc/RING finger domain, C3HC4 (zinc finger)"/>
    <property type="match status" value="1"/>
</dbReference>
<dbReference type="InterPro" id="IPR004181">
    <property type="entry name" value="Znf_MIZ"/>
</dbReference>
<dbReference type="InterPro" id="IPR013083">
    <property type="entry name" value="Znf_RING/FYVE/PHD"/>
</dbReference>
<dbReference type="PANTHER" id="PTHR10782:SF68">
    <property type="entry name" value="E4 SUMO-PROTEIN LIGASE PIAL1"/>
    <property type="match status" value="1"/>
</dbReference>
<dbReference type="PANTHER" id="PTHR10782">
    <property type="entry name" value="ZINC FINGER MIZ DOMAIN-CONTAINING PROTEIN"/>
    <property type="match status" value="1"/>
</dbReference>
<dbReference type="Pfam" id="PF02891">
    <property type="entry name" value="zf-MIZ"/>
    <property type="match status" value="1"/>
</dbReference>
<dbReference type="PROSITE" id="PS51044">
    <property type="entry name" value="ZF_SP_RING"/>
    <property type="match status" value="1"/>
</dbReference>
<keyword id="KW-0025">Alternative splicing</keyword>
<keyword id="KW-0436">Ligase</keyword>
<keyword id="KW-0479">Metal-binding</keyword>
<keyword id="KW-0539">Nucleus</keyword>
<keyword id="KW-1185">Reference proteome</keyword>
<keyword id="KW-0677">Repeat</keyword>
<keyword id="KW-0808">Transferase</keyword>
<keyword id="KW-0833">Ubl conjugation pathway</keyword>
<keyword id="KW-0862">Zinc</keyword>
<keyword id="KW-0863">Zinc-finger</keyword>
<comment type="function">
    <text evidence="3 4">Together with MOM1 and PIAL2, regulates transcriptional gene silencing (TGS) independently of changes in DNA methylation (PubMed:27113777). E4-type SUMO ligase that promotes SUMO chain formation in a SCE1-dependent manner and thus contributes to a pathway for proteolytic removal of sumoylation substrates (PubMed:25415977). Involved in stress responses (e.g. osmotic, salt and abscisic acid ABA) and sulfur metabolism (PubMed:25415977).</text>
</comment>
<comment type="pathway">
    <text evidence="3">Protein modification; protein sumoylation.</text>
</comment>
<comment type="subunit">
    <text evidence="1 4">Homodimer (By similarity). Interacts with MOM1 and PIAL2 to form a high molecular mass complex which mediates transcriptional gene silencing at heterochromatin regions (PubMed:27113777).</text>
</comment>
<comment type="subcellular location">
    <subcellularLocation>
        <location evidence="6">Nucleus</location>
    </subcellularLocation>
</comment>
<comment type="alternative products">
    <event type="alternative splicing"/>
    <isoform>
        <id>A0A0A7EPL0-1</id>
        <name>1</name>
        <sequence type="displayed"/>
    </isoform>
    <isoform>
        <id>A0A0A7EPL0-2</id>
        <name>2</name>
        <sequence type="described" ref="VSP_057991"/>
    </isoform>
</comment>
<comment type="tissue specificity">
    <text evidence="3">Expressed in leaves, stems and flowers, and, at low levels, in siliques and old leaves.</text>
</comment>
<comment type="disruption phenotype">
    <text evidence="3 4">No obvious growth difference under standard greenhouse conditions (PubMed:25415977). Altered sulfur metabolism (PubMed:25415977). Reduced growth in high osmotic pressure (mannitol) and in response to abscisic acid (ABA), but enhanced growth and fitness in high salt (NaCl) condition (PubMed:25415977). Abnormal steady state levels of SUMO conjugates in various conditions (PubMed:25415977). Released transcriptional silencing of target genes (e.g. LTR, SDC, ROMANIAT5 and At5te35950) but unchanged DNA methylation levels; the expression level of these genes is higher in plants lacking both PIAL1 and PIAL2 (PubMed:27113777).</text>
</comment>
<comment type="similarity">
    <text evidence="6">Belongs to the PIAL protein ligase family.</text>
</comment>
<comment type="sequence caution" evidence="6">
    <conflict type="erroneous gene model prediction">
        <sequence resource="EMBL-CDS" id="AAB70421"/>
    </conflict>
</comment>